<reference key="1">
    <citation type="journal article" date="2002" name="Mol. Microbiol.">
        <title>Genome sequence of Streptococcus agalactiae, a pathogen causing invasive neonatal disease.</title>
        <authorList>
            <person name="Glaser P."/>
            <person name="Rusniok C."/>
            <person name="Buchrieser C."/>
            <person name="Chevalier F."/>
            <person name="Frangeul L."/>
            <person name="Msadek T."/>
            <person name="Zouine M."/>
            <person name="Couve E."/>
            <person name="Lalioui L."/>
            <person name="Poyart C."/>
            <person name="Trieu-Cuot P."/>
            <person name="Kunst F."/>
        </authorList>
    </citation>
    <scope>NUCLEOTIDE SEQUENCE [LARGE SCALE GENOMIC DNA]</scope>
    <source>
        <strain>NEM316</strain>
    </source>
</reference>
<name>HRCA_STRA3</name>
<organism>
    <name type="scientific">Streptococcus agalactiae serotype III (strain NEM316)</name>
    <dbReference type="NCBI Taxonomy" id="211110"/>
    <lineage>
        <taxon>Bacteria</taxon>
        <taxon>Bacillati</taxon>
        <taxon>Bacillota</taxon>
        <taxon>Bacilli</taxon>
        <taxon>Lactobacillales</taxon>
        <taxon>Streptococcaceae</taxon>
        <taxon>Streptococcus</taxon>
    </lineage>
</organism>
<accession>Q8E7Q9</accession>
<dbReference type="EMBL" id="AL766843">
    <property type="protein sequence ID" value="CAD45739.1"/>
    <property type="molecule type" value="Genomic_DNA"/>
</dbReference>
<dbReference type="RefSeq" id="WP_011074698.1">
    <property type="nucleotide sequence ID" value="NC_004368.1"/>
</dbReference>
<dbReference type="SMR" id="Q8E7Q9"/>
<dbReference type="KEGG" id="san:gbs0094"/>
<dbReference type="eggNOG" id="COG1420">
    <property type="taxonomic scope" value="Bacteria"/>
</dbReference>
<dbReference type="HOGENOM" id="CLU_050019_1_0_9"/>
<dbReference type="Proteomes" id="UP000000823">
    <property type="component" value="Chromosome"/>
</dbReference>
<dbReference type="GO" id="GO:0003677">
    <property type="term" value="F:DNA binding"/>
    <property type="evidence" value="ECO:0007669"/>
    <property type="project" value="InterPro"/>
</dbReference>
<dbReference type="GO" id="GO:0045892">
    <property type="term" value="P:negative regulation of DNA-templated transcription"/>
    <property type="evidence" value="ECO:0007669"/>
    <property type="project" value="UniProtKB-UniRule"/>
</dbReference>
<dbReference type="Gene3D" id="3.30.450.40">
    <property type="match status" value="1"/>
</dbReference>
<dbReference type="Gene3D" id="3.30.390.60">
    <property type="entry name" value="Heat-inducible transcription repressor hrca homolog, domain 3"/>
    <property type="match status" value="1"/>
</dbReference>
<dbReference type="Gene3D" id="1.10.10.10">
    <property type="entry name" value="Winged helix-like DNA-binding domain superfamily/Winged helix DNA-binding domain"/>
    <property type="match status" value="1"/>
</dbReference>
<dbReference type="HAMAP" id="MF_00081">
    <property type="entry name" value="HrcA"/>
    <property type="match status" value="1"/>
</dbReference>
<dbReference type="InterPro" id="IPR029016">
    <property type="entry name" value="GAF-like_dom_sf"/>
</dbReference>
<dbReference type="InterPro" id="IPR002571">
    <property type="entry name" value="HrcA"/>
</dbReference>
<dbReference type="InterPro" id="IPR021153">
    <property type="entry name" value="HrcA_C"/>
</dbReference>
<dbReference type="InterPro" id="IPR036388">
    <property type="entry name" value="WH-like_DNA-bd_sf"/>
</dbReference>
<dbReference type="InterPro" id="IPR036390">
    <property type="entry name" value="WH_DNA-bd_sf"/>
</dbReference>
<dbReference type="InterPro" id="IPR005104">
    <property type="entry name" value="WHTH_HrcA_DNA-bd"/>
</dbReference>
<dbReference type="InterPro" id="IPR023120">
    <property type="entry name" value="WHTH_transcript_rep_HrcA_IDD"/>
</dbReference>
<dbReference type="NCBIfam" id="TIGR00331">
    <property type="entry name" value="hrcA"/>
    <property type="match status" value="1"/>
</dbReference>
<dbReference type="PANTHER" id="PTHR34824">
    <property type="entry name" value="HEAT-INDUCIBLE TRANSCRIPTION REPRESSOR HRCA"/>
    <property type="match status" value="1"/>
</dbReference>
<dbReference type="PANTHER" id="PTHR34824:SF1">
    <property type="entry name" value="HEAT-INDUCIBLE TRANSCRIPTION REPRESSOR HRCA"/>
    <property type="match status" value="1"/>
</dbReference>
<dbReference type="Pfam" id="PF01628">
    <property type="entry name" value="HrcA"/>
    <property type="match status" value="1"/>
</dbReference>
<dbReference type="Pfam" id="PF03444">
    <property type="entry name" value="HrcA_DNA-bdg"/>
    <property type="match status" value="1"/>
</dbReference>
<dbReference type="PIRSF" id="PIRSF005485">
    <property type="entry name" value="HrcA"/>
    <property type="match status" value="1"/>
</dbReference>
<dbReference type="SUPFAM" id="SSF55781">
    <property type="entry name" value="GAF domain-like"/>
    <property type="match status" value="1"/>
</dbReference>
<dbReference type="SUPFAM" id="SSF46785">
    <property type="entry name" value="Winged helix' DNA-binding domain"/>
    <property type="match status" value="1"/>
</dbReference>
<feature type="chain" id="PRO_0000182534" description="Heat-inducible transcription repressor HrcA">
    <location>
        <begin position="1"/>
        <end position="344"/>
    </location>
</feature>
<gene>
    <name evidence="1" type="primary">hrcA</name>
    <name type="ordered locus">gbs0094</name>
</gene>
<proteinExistence type="inferred from homology"/>
<keyword id="KW-0678">Repressor</keyword>
<keyword id="KW-0346">Stress response</keyword>
<keyword id="KW-0804">Transcription</keyword>
<keyword id="KW-0805">Transcription regulation</keyword>
<protein>
    <recommendedName>
        <fullName evidence="1">Heat-inducible transcription repressor HrcA</fullName>
    </recommendedName>
</protein>
<sequence length="344" mass="38985">MITQRQNDILNLIVELFTQTHEPVGSKALQRTIESSSATIRNDMAKLEKLGLLEKAHTSSGRMPSPAGFKYFVEHSLRLDSIDEQDIYHVIKAFDFEAFKLEDMLQKASHILSEMTGYTSVILDVEPARQRLTGFDVVQLSNHDALAVMTLDESKPVTVQFAIPRNFLTRDLIAFKAIVEERLLDGSVMDIHYKLRTEIPQIVQKYFVTTDNVLQLFDYVFSELFLETVFVAGKVNSLTYSDLSTYQFLDNEQQVAISLRQGLKEGEMASVQVADSQEAALADVSVLTHKFLIPYRGFGLLSLIGPIDMDYRRSVSLVNIIGKVLAAKLGDYYRYLNSNHYEVH</sequence>
<comment type="function">
    <text evidence="1">Negative regulator of class I heat shock genes (grpE-dnaK-dnaJ and groELS operons). Prevents heat-shock induction of these operons.</text>
</comment>
<comment type="similarity">
    <text evidence="1">Belongs to the HrcA family.</text>
</comment>
<evidence type="ECO:0000255" key="1">
    <source>
        <dbReference type="HAMAP-Rule" id="MF_00081"/>
    </source>
</evidence>